<sequence length="1157" mass="133321">MSEKKVHLRLRKELSVPIAVVENESLAQLSYEEESQASLMDISMEQQQLRLHSHFDNSKVFTENNRYIVKTLQTDYSSGFSNDDELNGYIDMQIGYGLVNDHKKVYIWNIHSTQKDTPYITVPFRSDDNDEIAVAPRCILTFPATMDESPLALNPNDQDETGGLIIIKGSKAIYYEDINSINNLNFKLSEKFSHELELPINSSGGEKCDLMLNCEPAGIVLSTNMGRIFFITIRNSMGKPQLKLGKLLNKPFKLGIWSKIFNTNSSVVSLRNGPILGKGTRLVYITTNKGIFQTWQLSATNSHPTKLIDVNIYEAILESLQDLYPFAHGTLKIWDSHPLQDESSQLFLSSIYDSSCNETYYILSTIIFDSSSNSFTIFSTYRLNTFMESITDTKFKPKIFIPQMENANDTNEVTSILVMFPNAVVITQVNSKLDSSYSMRRKWEDIVSLRNDIDIIGSGYDSKSLYVLTKQMGVLQFFVKENEETNSKPEVGFVKSHVDQAVYFSKINANPIDFNLPPEISLDQESIEHDLKLTSEEIFHSNGKYIPPMLNTLGQHLSVRKEFFQNFLTFVAKNFNYKISPELKLDLIEKFEILNCCIKFNSIIRQSDVLNDIWEKTLSNYNLTQNEHLTTKTVVINSPDVFPVIFKQFLNHVVFVLFPSQNQNFKLNVTNLINLCFYDGILEEGEKTIRYELLELDPMEVDTSKLPWFINFDYLNCINQCFFDFTFACEEEGSLDSYKEGLLKIVKILYYQFNQFKIWINTQPVKSVNANDNFININNLYDDNHLDWNHVLCKVNLKEQCIQIAEFYKDLSGLVQTLQTLDQNDSTTVSLYETFFNEFPKEFSFTLFEYLIKHKKLNDLIFRFPQQHDVLIQFFQESAPKYGHVAWIQQILDGSYADAMNTLKNITVDDSKKGESLSECELHLNVAKLSSLLVEKDNLDINTLRKIQYNLDTIDAEKNISNKLKKGEVQICKRFKNGSIREVFNILVEELKSTTVVNLSDLVELYSMLDDEESLFIPLRLLSVDGNLLNFEVKKFLNALVWRRIVLLNASNEGDKLLQHIVKRVFDEELPKNNDFPLPSVDLLCDKSLLTPEYISETYGRFPIDQNAIREEIYEEISQVETLNSDNSLEIKLHSTIGSVAKEKNYTINYETNTVEY</sequence>
<proteinExistence type="evidence at protein level"/>
<protein>
    <recommendedName>
        <fullName>Nucleoporin NUP133</fullName>
    </recommendedName>
    <alternativeName>
        <fullName>Nuclear pore protein NUP133</fullName>
    </alternativeName>
</protein>
<name>NU133_YEAST</name>
<feature type="initiator methionine" description="Removed" evidence="11">
    <location>
        <position position="1"/>
    </location>
</feature>
<feature type="chain" id="PRO_0000204841" description="Nucleoporin NUP133">
    <location>
        <begin position="2"/>
        <end position="1157"/>
    </location>
</feature>
<feature type="region of interest" description="Required for normal NPC distribution">
    <location>
        <begin position="44"/>
        <end position="236"/>
    </location>
</feature>
<feature type="modified residue" description="N-acetylserine" evidence="11">
    <location>
        <position position="2"/>
    </location>
</feature>
<feature type="strand" evidence="14">
    <location>
        <begin position="60"/>
        <end position="63"/>
    </location>
</feature>
<feature type="strand" evidence="14">
    <location>
        <begin position="65"/>
        <end position="72"/>
    </location>
</feature>
<feature type="strand" evidence="14">
    <location>
        <begin position="87"/>
        <end position="91"/>
    </location>
</feature>
<feature type="turn" evidence="14">
    <location>
        <begin position="92"/>
        <end position="95"/>
    </location>
</feature>
<feature type="strand" evidence="14">
    <location>
        <begin position="96"/>
        <end position="100"/>
    </location>
</feature>
<feature type="strand" evidence="14">
    <location>
        <begin position="102"/>
        <end position="110"/>
    </location>
</feature>
<feature type="strand" evidence="14">
    <location>
        <begin position="120"/>
        <end position="123"/>
    </location>
</feature>
<feature type="strand" evidence="14">
    <location>
        <begin position="137"/>
        <end position="141"/>
    </location>
</feature>
<feature type="helix" evidence="14">
    <location>
        <begin position="156"/>
        <end position="158"/>
    </location>
</feature>
<feature type="strand" evidence="14">
    <location>
        <begin position="163"/>
        <end position="168"/>
    </location>
</feature>
<feature type="strand" evidence="14">
    <location>
        <begin position="171"/>
        <end position="176"/>
    </location>
</feature>
<feature type="helix" evidence="14">
    <location>
        <begin position="178"/>
        <end position="181"/>
    </location>
</feature>
<feature type="helix" evidence="14">
    <location>
        <begin position="186"/>
        <end position="189"/>
    </location>
</feature>
<feature type="helix" evidence="14">
    <location>
        <begin position="190"/>
        <end position="192"/>
    </location>
</feature>
<feature type="strand" evidence="14">
    <location>
        <begin position="194"/>
        <end position="197"/>
    </location>
</feature>
<feature type="turn" evidence="14">
    <location>
        <begin position="202"/>
        <end position="205"/>
    </location>
</feature>
<feature type="strand" evidence="14">
    <location>
        <begin position="208"/>
        <end position="214"/>
    </location>
</feature>
<feature type="turn" evidence="14">
    <location>
        <begin position="215"/>
        <end position="217"/>
    </location>
</feature>
<feature type="strand" evidence="14">
    <location>
        <begin position="218"/>
        <end position="223"/>
    </location>
</feature>
<feature type="strand" evidence="14">
    <location>
        <begin position="228"/>
        <end position="234"/>
    </location>
</feature>
<feature type="strand" evidence="13">
    <location>
        <begin position="236"/>
        <end position="238"/>
    </location>
</feature>
<feature type="strand" evidence="14">
    <location>
        <begin position="240"/>
        <end position="247"/>
    </location>
</feature>
<feature type="strand" evidence="14">
    <location>
        <begin position="267"/>
        <end position="277"/>
    </location>
</feature>
<feature type="strand" evidence="14">
    <location>
        <begin position="280"/>
        <end position="287"/>
    </location>
</feature>
<feature type="strand" evidence="14">
    <location>
        <begin position="291"/>
        <end position="301"/>
    </location>
</feature>
<feature type="strand" evidence="14">
    <location>
        <begin position="305"/>
        <end position="311"/>
    </location>
</feature>
<feature type="helix" evidence="14">
    <location>
        <begin position="313"/>
        <end position="320"/>
    </location>
</feature>
<feature type="turn" evidence="14">
    <location>
        <begin position="321"/>
        <end position="323"/>
    </location>
</feature>
<feature type="helix" evidence="14">
    <location>
        <begin position="325"/>
        <end position="327"/>
    </location>
</feature>
<feature type="turn" evidence="14">
    <location>
        <begin position="328"/>
        <end position="330"/>
    </location>
</feature>
<feature type="strand" evidence="14">
    <location>
        <begin position="332"/>
        <end position="338"/>
    </location>
</feature>
<feature type="strand" evidence="14">
    <location>
        <begin position="342"/>
        <end position="353"/>
    </location>
</feature>
<feature type="turn" evidence="14">
    <location>
        <begin position="354"/>
        <end position="357"/>
    </location>
</feature>
<feature type="strand" evidence="14">
    <location>
        <begin position="358"/>
        <end position="369"/>
    </location>
</feature>
<feature type="turn" evidence="14">
    <location>
        <begin position="370"/>
        <end position="373"/>
    </location>
</feature>
<feature type="strand" evidence="14">
    <location>
        <begin position="374"/>
        <end position="382"/>
    </location>
</feature>
<feature type="strand" evidence="14">
    <location>
        <begin position="398"/>
        <end position="400"/>
    </location>
</feature>
<feature type="helix" evidence="13">
    <location>
        <begin position="402"/>
        <end position="405"/>
    </location>
</feature>
<feature type="strand" evidence="14">
    <location>
        <begin position="413"/>
        <end position="420"/>
    </location>
</feature>
<feature type="strand" evidence="14">
    <location>
        <begin position="423"/>
        <end position="430"/>
    </location>
</feature>
<feature type="strand" evidence="13">
    <location>
        <begin position="437"/>
        <end position="440"/>
    </location>
</feature>
<feature type="strand" evidence="14">
    <location>
        <begin position="442"/>
        <end position="448"/>
    </location>
</feature>
<feature type="strand" evidence="14">
    <location>
        <begin position="455"/>
        <end position="460"/>
    </location>
</feature>
<feature type="strand" evidence="14">
    <location>
        <begin position="462"/>
        <end position="469"/>
    </location>
</feature>
<feature type="turn" evidence="14">
    <location>
        <begin position="470"/>
        <end position="472"/>
    </location>
</feature>
<feature type="strand" evidence="14">
    <location>
        <begin position="473"/>
        <end position="479"/>
    </location>
</feature>
<feature type="helix" evidence="12">
    <location>
        <begin position="951"/>
        <end position="965"/>
    </location>
</feature>
<feature type="helix" evidence="12">
    <location>
        <begin position="973"/>
        <end position="975"/>
    </location>
</feature>
<feature type="helix" evidence="12">
    <location>
        <begin position="978"/>
        <end position="992"/>
    </location>
</feature>
<feature type="strand" evidence="12">
    <location>
        <begin position="993"/>
        <end position="995"/>
    </location>
</feature>
<feature type="helix" evidence="12">
    <location>
        <begin position="999"/>
        <end position="1006"/>
    </location>
</feature>
<feature type="helix" evidence="12">
    <location>
        <begin position="1012"/>
        <end position="1025"/>
    </location>
</feature>
<feature type="helix" evidence="12">
    <location>
        <begin position="1026"/>
        <end position="1028"/>
    </location>
</feature>
<feature type="helix" evidence="12">
    <location>
        <begin position="1031"/>
        <end position="1049"/>
    </location>
</feature>
<feature type="helix" evidence="12">
    <location>
        <begin position="1056"/>
        <end position="1067"/>
    </location>
</feature>
<feature type="helix" evidence="12">
    <location>
        <begin position="1070"/>
        <end position="1073"/>
    </location>
</feature>
<feature type="helix" evidence="12">
    <location>
        <begin position="1081"/>
        <end position="1084"/>
    </location>
</feature>
<feature type="helix" evidence="12">
    <location>
        <begin position="1087"/>
        <end position="1089"/>
    </location>
</feature>
<feature type="helix" evidence="12">
    <location>
        <begin position="1092"/>
        <end position="1099"/>
    </location>
</feature>
<feature type="strand" evidence="12">
    <location>
        <begin position="1102"/>
        <end position="1104"/>
    </location>
</feature>
<feature type="helix" evidence="12">
    <location>
        <begin position="1106"/>
        <end position="1123"/>
    </location>
</feature>
<feature type="helix" evidence="12">
    <location>
        <begin position="1124"/>
        <end position="1127"/>
    </location>
</feature>
<feature type="helix" evidence="12">
    <location>
        <begin position="1128"/>
        <end position="1141"/>
    </location>
</feature>
<feature type="strand" evidence="12">
    <location>
        <begin position="1144"/>
        <end position="1149"/>
    </location>
</feature>
<feature type="turn" evidence="12">
    <location>
        <begin position="1150"/>
        <end position="1153"/>
    </location>
</feature>
<feature type="strand" evidence="12">
    <location>
        <begin position="1154"/>
        <end position="1157"/>
    </location>
</feature>
<evidence type="ECO:0000269" key="1">
    <source>
    </source>
</evidence>
<evidence type="ECO:0000269" key="2">
    <source>
    </source>
</evidence>
<evidence type="ECO:0000269" key="3">
    <source>
    </source>
</evidence>
<evidence type="ECO:0000269" key="4">
    <source>
    </source>
</evidence>
<evidence type="ECO:0000269" key="5">
    <source>
    </source>
</evidence>
<evidence type="ECO:0000269" key="6">
    <source>
    </source>
</evidence>
<evidence type="ECO:0000269" key="7">
    <source>
    </source>
</evidence>
<evidence type="ECO:0000269" key="8">
    <source>
    </source>
</evidence>
<evidence type="ECO:0000269" key="9">
    <source>
    </source>
</evidence>
<evidence type="ECO:0000305" key="10"/>
<evidence type="ECO:0007744" key="11">
    <source>
    </source>
</evidence>
<evidence type="ECO:0007829" key="12">
    <source>
        <dbReference type="PDB" id="3KFO"/>
    </source>
</evidence>
<evidence type="ECO:0007829" key="13">
    <source>
        <dbReference type="PDB" id="6X04"/>
    </source>
</evidence>
<evidence type="ECO:0007829" key="14">
    <source>
        <dbReference type="PDB" id="6X05"/>
    </source>
</evidence>
<comment type="function">
    <text evidence="1 2 3 4 6 7 8 9">Functions as a component of the nuclear pore complex (NPC). NPC components, collectively referred to as nucleoporins (NUPs), can play the role of both NPC structural components and of docking or interaction partners for transiently associated nuclear transport factors. NUP133 is involved in nuclear poly(A)+ RNA, tRNA and pre-ribosome export, in GSP1 nuclear import, in NPC assembly and distribution, as well as in nuclear envelope organization.</text>
</comment>
<comment type="subunit">
    <text evidence="1">Component of the nuclear pore complex (NPC). NPC constitutes the exclusive means of nucleocytoplasmic transport. NPCs allow the passive diffusion of ions and small molecules and the active, nuclear transport receptor-mediated bidirectional transport of macromolecules such as proteins, RNAs, ribonucleoparticles (RNPs), and ribosomal subunits across the nuclear envelope. Due to its 8-fold rotational symmetry, all subunits are present with 8 copies or multiples thereof. NUP133 is part of the heptameric 0.5 MDa autoassembling NUP84 NPC subcomplex (NUP84, NUP85, NUP120, NUP133, NUP145C, SEC13 and SEH1).</text>
</comment>
<comment type="interaction">
    <interactant intactId="EBI-11722">
        <id>P36161</id>
    </interactant>
    <interactant intactId="EBI-11713">
        <id>P35729</id>
        <label>NUP120</label>
    </interactant>
    <organismsDiffer>false</organismsDiffer>
    <experiments>7</experiments>
</comment>
<comment type="interaction">
    <interactant intactId="EBI-11722">
        <id>P36161</id>
    </interactant>
    <interactant intactId="EBI-12337">
        <id>P52891</id>
        <label>NUP84</label>
    </interactant>
    <organismsDiffer>false</organismsDiffer>
    <experiments>3</experiments>
</comment>
<comment type="interaction">
    <interactant intactId="EBI-11722">
        <id>P36161</id>
    </interactant>
    <interactant intactId="EBI-12345">
        <id>P46673</id>
        <label>NUP85</label>
    </interactant>
    <organismsDiffer>false</organismsDiffer>
    <experiments>3</experiments>
</comment>
<comment type="subcellular location">
    <subcellularLocation>
        <location evidence="1">Nucleus</location>
        <location evidence="1">Nuclear pore complex</location>
    </subcellularLocation>
    <subcellularLocation>
        <location>Nucleus membrane</location>
        <topology>Peripheral membrane protein</topology>
        <orientation>Cytoplasmic side</orientation>
    </subcellularLocation>
    <subcellularLocation>
        <location>Nucleus membrane</location>
        <topology>Peripheral membrane protein</topology>
        <orientation>Nucleoplasmic side</orientation>
    </subcellularLocation>
    <text>Symmetric distribution.</text>
</comment>
<comment type="domain">
    <text>Usually mRNA binding pumilio repeats come in 8 copies. In the 8-fold symmetry of the NPC the 8 repeats may be provided by eight copies of NUP133.</text>
</comment>
<comment type="miscellaneous">
    <text evidence="5">Present with 3060 molecules/cell in log phase SD medium.</text>
</comment>
<comment type="similarity">
    <text evidence="10">Belongs to the nucleoporin Nup133 family.</text>
</comment>
<dbReference type="EMBL" id="X80066">
    <property type="protein sequence ID" value="CAA56372.1"/>
    <property type="molecule type" value="Genomic_DNA"/>
</dbReference>
<dbReference type="EMBL" id="Z27116">
    <property type="protein sequence ID" value="CAA81633.1"/>
    <property type="molecule type" value="Genomic_DNA"/>
</dbReference>
<dbReference type="EMBL" id="Z28307">
    <property type="protein sequence ID" value="CAA82161.1"/>
    <property type="molecule type" value="Genomic_DNA"/>
</dbReference>
<dbReference type="EMBL" id="BK006944">
    <property type="protein sequence ID" value="DAA09232.1"/>
    <property type="molecule type" value="Genomic_DNA"/>
</dbReference>
<dbReference type="PIR" id="S38160">
    <property type="entry name" value="S38160"/>
</dbReference>
<dbReference type="RefSeq" id="NP_013008.3">
    <property type="nucleotide sequence ID" value="NM_001179872.3"/>
</dbReference>
<dbReference type="PDB" id="3KFO">
    <property type="method" value="X-ray"/>
    <property type="resolution" value="1.90 A"/>
    <property type="chains" value="A=881-1157"/>
</dbReference>
<dbReference type="PDB" id="6X02">
    <property type="method" value="X-ray"/>
    <property type="resolution" value="6.38 A"/>
    <property type="chains" value="B=521-1157"/>
</dbReference>
<dbReference type="PDB" id="6X03">
    <property type="method" value="X-ray"/>
    <property type="resolution" value="7.30 A"/>
    <property type="chains" value="B=521-1157"/>
</dbReference>
<dbReference type="PDB" id="6X04">
    <property type="method" value="X-ray"/>
    <property type="resolution" value="2.68 A"/>
    <property type="chains" value="A/C/E/G/I/K=55-481"/>
</dbReference>
<dbReference type="PDB" id="6X05">
    <property type="method" value="X-ray"/>
    <property type="resolution" value="2.10 A"/>
    <property type="chains" value="A=55-481"/>
</dbReference>
<dbReference type="PDB" id="7N84">
    <property type="method" value="EM"/>
    <property type="resolution" value="11.60 A"/>
    <property type="chains" value="g/r=1-1157"/>
</dbReference>
<dbReference type="PDB" id="7N9F">
    <property type="method" value="EM"/>
    <property type="resolution" value="37.00 A"/>
    <property type="chains" value="g/n=1-1157"/>
</dbReference>
<dbReference type="PDB" id="8TIE">
    <property type="method" value="EM"/>
    <property type="resolution" value="8.10 A"/>
    <property type="chains" value="g/r=1-1157"/>
</dbReference>
<dbReference type="PDBsum" id="3KFO"/>
<dbReference type="PDBsum" id="6X02"/>
<dbReference type="PDBsum" id="6X03"/>
<dbReference type="PDBsum" id="6X04"/>
<dbReference type="PDBsum" id="6X05"/>
<dbReference type="PDBsum" id="7N84"/>
<dbReference type="PDBsum" id="7N9F"/>
<dbReference type="PDBsum" id="8TIE"/>
<dbReference type="EMDB" id="EMD-24231"/>
<dbReference type="EMDB" id="EMD-24258"/>
<dbReference type="SMR" id="P36161"/>
<dbReference type="BioGRID" id="34213">
    <property type="interactions" value="570"/>
</dbReference>
<dbReference type="ComplexPortal" id="CPX-824">
    <property type="entry name" value="Nuclear pore complex"/>
</dbReference>
<dbReference type="DIP" id="DIP-2428N"/>
<dbReference type="FunCoup" id="P36161">
    <property type="interactions" value="195"/>
</dbReference>
<dbReference type="IntAct" id="P36161">
    <property type="interactions" value="24"/>
</dbReference>
<dbReference type="MINT" id="P36161"/>
<dbReference type="STRING" id="4932.YKR082W"/>
<dbReference type="TCDB" id="1.I.1.1.1">
    <property type="family name" value="the nuclear pore complex (npc) family"/>
</dbReference>
<dbReference type="iPTMnet" id="P36161"/>
<dbReference type="PaxDb" id="4932-YKR082W"/>
<dbReference type="PeptideAtlas" id="P36161"/>
<dbReference type="DNASU" id="853957"/>
<dbReference type="EnsemblFungi" id="YKR082W_mRNA">
    <property type="protein sequence ID" value="YKR082W"/>
    <property type="gene ID" value="YKR082W"/>
</dbReference>
<dbReference type="GeneID" id="853957"/>
<dbReference type="KEGG" id="sce:YKR082W"/>
<dbReference type="AGR" id="SGD:S000001790"/>
<dbReference type="SGD" id="S000001790">
    <property type="gene designation" value="NUP133"/>
</dbReference>
<dbReference type="VEuPathDB" id="FungiDB:YKR082W"/>
<dbReference type="eggNOG" id="KOG4121">
    <property type="taxonomic scope" value="Eukaryota"/>
</dbReference>
<dbReference type="GeneTree" id="ENSGT00390000011529"/>
<dbReference type="HOGENOM" id="CLU_274661_0_0_1"/>
<dbReference type="InParanoid" id="P36161"/>
<dbReference type="OMA" id="HVATLLW"/>
<dbReference type="OrthoDB" id="103454at2759"/>
<dbReference type="BioCyc" id="YEAST:G3O-32045-MONOMER"/>
<dbReference type="Reactome" id="R-SCE-159236">
    <property type="pathway name" value="Transport of Mature mRNA derived from an Intron-Containing Transcript"/>
</dbReference>
<dbReference type="Reactome" id="R-SCE-3371453">
    <property type="pathway name" value="Regulation of HSF1-mediated heat shock response"/>
</dbReference>
<dbReference type="Reactome" id="R-SCE-4085377">
    <property type="pathway name" value="SUMOylation of SUMOylation proteins"/>
</dbReference>
<dbReference type="Reactome" id="R-SCE-4551638">
    <property type="pathway name" value="SUMOylation of chromatin organization proteins"/>
</dbReference>
<dbReference type="Reactome" id="R-SCE-4570464">
    <property type="pathway name" value="SUMOylation of RNA binding proteins"/>
</dbReference>
<dbReference type="BioGRID-ORCS" id="853957">
    <property type="hits" value="1 hit in 10 CRISPR screens"/>
</dbReference>
<dbReference type="EvolutionaryTrace" id="P36161"/>
<dbReference type="PRO" id="PR:P36161"/>
<dbReference type="Proteomes" id="UP000002311">
    <property type="component" value="Chromosome XI"/>
</dbReference>
<dbReference type="RNAct" id="P36161">
    <property type="molecule type" value="protein"/>
</dbReference>
<dbReference type="GO" id="GO:0000781">
    <property type="term" value="C:chromosome, telomeric region"/>
    <property type="evidence" value="ECO:0007669"/>
    <property type="project" value="GOC"/>
</dbReference>
<dbReference type="GO" id="GO:0005829">
    <property type="term" value="C:cytosol"/>
    <property type="evidence" value="ECO:0000314"/>
    <property type="project" value="SGD"/>
</dbReference>
<dbReference type="GO" id="GO:0005635">
    <property type="term" value="C:nuclear envelope"/>
    <property type="evidence" value="ECO:0000303"/>
    <property type="project" value="ComplexPortal"/>
</dbReference>
<dbReference type="GO" id="GO:0031965">
    <property type="term" value="C:nuclear membrane"/>
    <property type="evidence" value="ECO:0007669"/>
    <property type="project" value="UniProtKB-SubCell"/>
</dbReference>
<dbReference type="GO" id="GO:0005643">
    <property type="term" value="C:nuclear pore"/>
    <property type="evidence" value="ECO:0000314"/>
    <property type="project" value="SGD"/>
</dbReference>
<dbReference type="GO" id="GO:0031080">
    <property type="term" value="C:nuclear pore outer ring"/>
    <property type="evidence" value="ECO:0000314"/>
    <property type="project" value="SGD"/>
</dbReference>
<dbReference type="GO" id="GO:0005634">
    <property type="term" value="C:nucleus"/>
    <property type="evidence" value="ECO:0000314"/>
    <property type="project" value="SGD"/>
</dbReference>
<dbReference type="GO" id="GO:0017056">
    <property type="term" value="F:structural constituent of nuclear pore"/>
    <property type="evidence" value="ECO:0000315"/>
    <property type="project" value="SGD"/>
</dbReference>
<dbReference type="GO" id="GO:0034605">
    <property type="term" value="P:cellular response to heat"/>
    <property type="evidence" value="ECO:0000315"/>
    <property type="project" value="SGD"/>
</dbReference>
<dbReference type="GO" id="GO:0006302">
    <property type="term" value="P:double-strand break repair"/>
    <property type="evidence" value="ECO:0000315"/>
    <property type="project" value="SGD"/>
</dbReference>
<dbReference type="GO" id="GO:0031990">
    <property type="term" value="P:mRNA export from nucleus in response to heat stress"/>
    <property type="evidence" value="ECO:0000315"/>
    <property type="project" value="SGD"/>
</dbReference>
<dbReference type="GO" id="GO:0000122">
    <property type="term" value="P:negative regulation of transcription by RNA polymerase II"/>
    <property type="evidence" value="ECO:0000315"/>
    <property type="project" value="SGD"/>
</dbReference>
<dbReference type="GO" id="GO:0051664">
    <property type="term" value="P:nuclear pore localization"/>
    <property type="evidence" value="ECO:0000315"/>
    <property type="project" value="SGD"/>
</dbReference>
<dbReference type="GO" id="GO:0006913">
    <property type="term" value="P:nucleocytoplasmic transport"/>
    <property type="evidence" value="ECO:0000303"/>
    <property type="project" value="ComplexPortal"/>
</dbReference>
<dbReference type="GO" id="GO:0016973">
    <property type="term" value="P:poly(A)+ mRNA export from nucleus"/>
    <property type="evidence" value="ECO:0000315"/>
    <property type="project" value="SGD"/>
</dbReference>
<dbReference type="GO" id="GO:0045893">
    <property type="term" value="P:positive regulation of DNA-templated transcription"/>
    <property type="evidence" value="ECO:0000314"/>
    <property type="project" value="SGD"/>
</dbReference>
<dbReference type="GO" id="GO:0045944">
    <property type="term" value="P:positive regulation of transcription by RNA polymerase II"/>
    <property type="evidence" value="ECO:0000315"/>
    <property type="project" value="SGD"/>
</dbReference>
<dbReference type="GO" id="GO:0000973">
    <property type="term" value="P:post-transcriptional tethering of RNA polymerase II gene DNA at nuclear periphery"/>
    <property type="evidence" value="ECO:0000315"/>
    <property type="project" value="SGD"/>
</dbReference>
<dbReference type="GO" id="GO:0006606">
    <property type="term" value="P:protein import into nucleus"/>
    <property type="evidence" value="ECO:0000315"/>
    <property type="project" value="SGD"/>
</dbReference>
<dbReference type="GO" id="GO:0030466">
    <property type="term" value="P:silent mating-type cassette heterochromatin formation"/>
    <property type="evidence" value="ECO:0000314"/>
    <property type="project" value="SGD"/>
</dbReference>
<dbReference type="GO" id="GO:0031509">
    <property type="term" value="P:subtelomeric heterochromatin formation"/>
    <property type="evidence" value="ECO:0000315"/>
    <property type="project" value="SGD"/>
</dbReference>
<dbReference type="GO" id="GO:0034398">
    <property type="term" value="P:telomere tethering at nuclear periphery"/>
    <property type="evidence" value="ECO:0000315"/>
    <property type="project" value="SGD"/>
</dbReference>
<dbReference type="GO" id="GO:0000972">
    <property type="term" value="P:transcription-dependent tethering of RNA polymerase II gene DNA at nuclear periphery"/>
    <property type="evidence" value="ECO:0000318"/>
    <property type="project" value="GO_Central"/>
</dbReference>
<dbReference type="GO" id="GO:0006409">
    <property type="term" value="P:tRNA export from nucleus"/>
    <property type="evidence" value="ECO:0000315"/>
    <property type="project" value="SGD"/>
</dbReference>
<dbReference type="DisProt" id="DP02158"/>
<dbReference type="Gene3D" id="2.130.10.10">
    <property type="entry name" value="YVTN repeat-like/Quinoprotein amine dehydrogenase"/>
    <property type="match status" value="1"/>
</dbReference>
<dbReference type="InterPro" id="IPR014908">
    <property type="entry name" value="Nucleoporin_Nup133/Nup155_N"/>
</dbReference>
<dbReference type="InterPro" id="IPR037624">
    <property type="entry name" value="Nup133-like"/>
</dbReference>
<dbReference type="InterPro" id="IPR015943">
    <property type="entry name" value="WD40/YVTN_repeat-like_dom_sf"/>
</dbReference>
<dbReference type="PANTHER" id="PTHR13405">
    <property type="entry name" value="NUCLEAR PORE COMPLEX PROTEIN NUP133"/>
    <property type="match status" value="1"/>
</dbReference>
<dbReference type="PANTHER" id="PTHR13405:SF11">
    <property type="entry name" value="NUCLEAR PORE COMPLEX PROTEIN NUP133"/>
    <property type="match status" value="1"/>
</dbReference>
<dbReference type="Pfam" id="PF08801">
    <property type="entry name" value="Nucleoporin_N"/>
    <property type="match status" value="1"/>
</dbReference>
<dbReference type="SUPFAM" id="SSF117289">
    <property type="entry name" value="Nucleoporin domain"/>
    <property type="match status" value="1"/>
</dbReference>
<reference key="1">
    <citation type="journal article" date="1994" name="EMBO J.">
        <title>A novel nuclear pore protein Nup133p with distinct roles in poly(A)+ RNA transport and nuclear pore distribution.</title>
        <authorList>
            <person name="Doye V."/>
            <person name="Wepf R."/>
            <person name="Hurt E.C."/>
        </authorList>
    </citation>
    <scope>NUCLEOTIDE SEQUENCE [GENOMIC DNA]</scope>
    <scope>FUNCTION IN NUCLEAR MRNA EXPORT</scope>
    <source>
        <strain>JUXJR</strain>
    </source>
</reference>
<reference key="2">
    <citation type="journal article" date="1994" name="Yeast">
        <title>The complete sequence of an 18,002 bp segment of Saccharomyces cerevisiae chromosome XI contains the HBS1, MRP-L20 and PRP16 genes, and six new open reading frames.</title>
        <authorList>
            <person name="Garcia-Cantalejo J.M."/>
            <person name="Baladron V."/>
            <person name="Esteban P.F."/>
            <person name="Santos M.A."/>
            <person name="Bou G."/>
            <person name="Remacha M.A."/>
            <person name="Revuelta J.L."/>
            <person name="Ballesta J.P.G."/>
            <person name="Jimenez A."/>
            <person name="del Rey F."/>
        </authorList>
    </citation>
    <scope>NUCLEOTIDE SEQUENCE [GENOMIC DNA]</scope>
</reference>
<reference key="3">
    <citation type="journal article" date="1994" name="Nature">
        <title>Complete DNA sequence of yeast chromosome XI.</title>
        <authorList>
            <person name="Dujon B."/>
            <person name="Alexandraki D."/>
            <person name="Andre B."/>
            <person name="Ansorge W."/>
            <person name="Baladron V."/>
            <person name="Ballesta J.P.G."/>
            <person name="Banrevi A."/>
            <person name="Bolle P.-A."/>
            <person name="Bolotin-Fukuhara M."/>
            <person name="Bossier P."/>
            <person name="Bou G."/>
            <person name="Boyer J."/>
            <person name="Buitrago M.J."/>
            <person name="Cheret G."/>
            <person name="Colleaux L."/>
            <person name="Daignan-Fornier B."/>
            <person name="del Rey F."/>
            <person name="Dion C."/>
            <person name="Domdey H."/>
            <person name="Duesterhoeft A."/>
            <person name="Duesterhus S."/>
            <person name="Entian K.-D."/>
            <person name="Erfle H."/>
            <person name="Esteban P.F."/>
            <person name="Feldmann H."/>
            <person name="Fernandes L."/>
            <person name="Fobo G.M."/>
            <person name="Fritz C."/>
            <person name="Fukuhara H."/>
            <person name="Gabel C."/>
            <person name="Gaillon L."/>
            <person name="Garcia-Cantalejo J.M."/>
            <person name="Garcia-Ramirez J.J."/>
            <person name="Gent M.E."/>
            <person name="Ghazvini M."/>
            <person name="Goffeau A."/>
            <person name="Gonzalez A."/>
            <person name="Grothues D."/>
            <person name="Guerreiro P."/>
            <person name="Hegemann J.H."/>
            <person name="Hewitt N."/>
            <person name="Hilger F."/>
            <person name="Hollenberg C.P."/>
            <person name="Horaitis O."/>
            <person name="Indge K.J."/>
            <person name="Jacquier A."/>
            <person name="James C.M."/>
            <person name="Jauniaux J.-C."/>
            <person name="Jimenez A."/>
            <person name="Keuchel H."/>
            <person name="Kirchrath L."/>
            <person name="Kleine K."/>
            <person name="Koetter P."/>
            <person name="Legrain P."/>
            <person name="Liebl S."/>
            <person name="Louis E.J."/>
            <person name="Maia e Silva A."/>
            <person name="Marck C."/>
            <person name="Monnier A.-L."/>
            <person name="Moestl D."/>
            <person name="Mueller S."/>
            <person name="Obermaier B."/>
            <person name="Oliver S.G."/>
            <person name="Pallier C."/>
            <person name="Pascolo S."/>
            <person name="Pfeiffer F."/>
            <person name="Philippsen P."/>
            <person name="Planta R.J."/>
            <person name="Pohl F.M."/>
            <person name="Pohl T.M."/>
            <person name="Poehlmann R."/>
            <person name="Portetelle D."/>
            <person name="Purnelle B."/>
            <person name="Puzos V."/>
            <person name="Ramezani Rad M."/>
            <person name="Rasmussen S.W."/>
            <person name="Remacha M.A."/>
            <person name="Revuelta J.L."/>
            <person name="Richard G.-F."/>
            <person name="Rieger M."/>
            <person name="Rodrigues-Pousada C."/>
            <person name="Rose M."/>
            <person name="Rupp T."/>
            <person name="Santos M.A."/>
            <person name="Schwager C."/>
            <person name="Sensen C."/>
            <person name="Skala J."/>
            <person name="Soares H."/>
            <person name="Sor F."/>
            <person name="Stegemann J."/>
            <person name="Tettelin H."/>
            <person name="Thierry A."/>
            <person name="Tzermia M."/>
            <person name="Urrestarazu L.A."/>
            <person name="van Dyck L."/>
            <person name="van Vliet-Reedijk J.C."/>
            <person name="Valens M."/>
            <person name="Vandenbol M."/>
            <person name="Vilela C."/>
            <person name="Vissers S."/>
            <person name="von Wettstein D."/>
            <person name="Voss H."/>
            <person name="Wiemann S."/>
            <person name="Xu G."/>
            <person name="Zimmermann J."/>
            <person name="Haasemann M."/>
            <person name="Becker I."/>
            <person name="Mewes H.-W."/>
        </authorList>
    </citation>
    <scope>NUCLEOTIDE SEQUENCE [LARGE SCALE GENOMIC DNA]</scope>
    <source>
        <strain>ATCC 204508 / S288c</strain>
    </source>
</reference>
<reference key="4">
    <citation type="journal article" date="2014" name="G3 (Bethesda)">
        <title>The reference genome sequence of Saccharomyces cerevisiae: Then and now.</title>
        <authorList>
            <person name="Engel S.R."/>
            <person name="Dietrich F.S."/>
            <person name="Fisk D.G."/>
            <person name="Binkley G."/>
            <person name="Balakrishnan R."/>
            <person name="Costanzo M.C."/>
            <person name="Dwight S.S."/>
            <person name="Hitz B.C."/>
            <person name="Karra K."/>
            <person name="Nash R.S."/>
            <person name="Weng S."/>
            <person name="Wong E.D."/>
            <person name="Lloyd P."/>
            <person name="Skrzypek M.S."/>
            <person name="Miyasato S.R."/>
            <person name="Simison M."/>
            <person name="Cherry J.M."/>
        </authorList>
    </citation>
    <scope>GENOME REANNOTATION</scope>
    <source>
        <strain>ATCC 204508 / S288c</strain>
    </source>
</reference>
<reference key="5">
    <citation type="journal article" date="1995" name="Proc. Natl. Acad. Sci. U.S.A.">
        <title>Disruption of the nucleoporin gene NUP133 results in clustering of nuclear pore complexes.</title>
        <authorList>
            <person name="Pemberton L.F."/>
            <person name="Rout M.P."/>
            <person name="Blobel G."/>
        </authorList>
    </citation>
    <scope>FUNCTION</scope>
    <scope>NPC ASSEMBLY AND DISTRIBUTION</scope>
</reference>
<reference key="6">
    <citation type="journal article" date="1996" name="Mol. Cell. Biol.">
        <title>Yeast nucleoporin mutants are defective in pre-tRNA splicing.</title>
        <authorList>
            <person name="Sharma K."/>
            <person name="Fabre E."/>
            <person name="Tekotte H."/>
            <person name="Hurt E.C."/>
            <person name="Tollervey D."/>
        </authorList>
    </citation>
    <scope>FUNCTION</scope>
    <scope>NUCLEAR TRNA EXPORT</scope>
</reference>
<reference key="7">
    <citation type="journal article" date="1997" name="J. Cell Biol.">
        <title>Dynamics of nuclear pore distribution in nucleoporin mutant yeast cells.</title>
        <authorList>
            <person name="Belgareh N."/>
            <person name="Doye V."/>
        </authorList>
    </citation>
    <scope>FUNCTION</scope>
    <scope>NUP133 N-TERMINUS IN NPC DISTRIBUTION</scope>
</reference>
<reference key="8">
    <citation type="journal article" date="2000" name="Mol. Biol. Cell">
        <title>Factors affecting nuclear export of the 60S ribosomal subunit in vivo.</title>
        <authorList>
            <person name="Stage-Zimmermann T."/>
            <person name="Schmidt U."/>
            <person name="Silver P.A."/>
        </authorList>
    </citation>
    <scope>FUNCTION</scope>
    <scope>PRE-RIBOSOME EXPORT</scope>
</reference>
<reference key="9">
    <citation type="journal article" date="2000" name="J. Cell Biol.">
        <title>The yeast nuclear pore complex: composition, architecture, and transport mechanism.</title>
        <authorList>
            <person name="Rout M.P."/>
            <person name="Aitchison J.D."/>
            <person name="Suprapto A."/>
            <person name="Hjertaas K."/>
            <person name="Zhao Y."/>
            <person name="Chait B.T."/>
        </authorList>
    </citation>
    <scope>FUNCTION</scope>
    <scope>IDENTIFICATION IN THE NUCLEAR PORE COMPLEX</scope>
    <scope>SUBCELLULAR LOCATION</scope>
</reference>
<reference key="10">
    <citation type="journal article" date="2002" name="EMBO J.">
        <title>Modular self-assembly of a Y-shaped multiprotein complex from seven nucleoporins.</title>
        <authorList>
            <person name="Lutzmann M."/>
            <person name="Kunze R."/>
            <person name="Buerer A."/>
            <person name="Aebi U."/>
            <person name="Hurt E.C."/>
        </authorList>
    </citation>
    <scope>FUNCTION</scope>
    <scope>NUP84 NPC SUBCOMPLEX ASSEMBLY/STRUCTURE</scope>
</reference>
<reference key="11">
    <citation type="journal article" date="2003" name="J. Biol. Chem.">
        <title>Nuclear accumulation of the small GTPase Gsp1p depends on nucleoporins Nup133p, Rat2p/Nup120p, Nup85p, Nic96p, and the acetyl-CoA carboxylase Acc1p.</title>
        <authorList>
            <person name="Gao H."/>
            <person name="Sumanaweera N."/>
            <person name="Bailer S.M."/>
            <person name="Stochaj U."/>
        </authorList>
    </citation>
    <scope>FUNCTION</scope>
    <scope>NUCLEAR GSP1 IMPORT</scope>
</reference>
<reference key="12">
    <citation type="journal article" date="2003" name="Nature">
        <title>Global analysis of protein expression in yeast.</title>
        <authorList>
            <person name="Ghaemmaghami S."/>
            <person name="Huh W.-K."/>
            <person name="Bower K."/>
            <person name="Howson R.W."/>
            <person name="Belle A."/>
            <person name="Dephoure N."/>
            <person name="O'Shea E.K."/>
            <person name="Weissman J.S."/>
        </authorList>
    </citation>
    <scope>LEVEL OF PROTEIN EXPRESSION [LARGE SCALE ANALYSIS]</scope>
</reference>
<reference key="13">
    <citation type="journal article" date="2003" name="Dev. Cell">
        <title>Peering through the pore: nuclear pore complex structure, assembly, and function.</title>
        <authorList>
            <person name="Suntharalingam M."/>
            <person name="Wente S.R."/>
        </authorList>
    </citation>
    <scope>REVIEW</scope>
</reference>
<reference key="14">
    <citation type="journal article" date="2012" name="Proc. Natl. Acad. Sci. U.S.A.">
        <title>N-terminal acetylome analyses and functional insights of the N-terminal acetyltransferase NatB.</title>
        <authorList>
            <person name="Van Damme P."/>
            <person name="Lasa M."/>
            <person name="Polevoda B."/>
            <person name="Gazquez C."/>
            <person name="Elosegui-Artola A."/>
            <person name="Kim D.S."/>
            <person name="De Juan-Pardo E."/>
            <person name="Demeyer K."/>
            <person name="Hole K."/>
            <person name="Larrea E."/>
            <person name="Timmerman E."/>
            <person name="Prieto J."/>
            <person name="Arnesen T."/>
            <person name="Sherman F."/>
            <person name="Gevaert K."/>
            <person name="Aldabe R."/>
        </authorList>
    </citation>
    <scope>ACETYLATION [LARGE SCALE ANALYSIS] AT SER-2</scope>
    <scope>CLEAVAGE OF INITIATOR METHIONINE [LARGE SCALE ANALYSIS]</scope>
    <scope>IDENTIFICATION BY MASS SPECTROMETRY [LARGE SCALE ANALYSIS]</scope>
</reference>
<gene>
    <name type="primary">NUP133</name>
    <name type="synonym">RAT3</name>
    <name type="ordered locus">YKR082W</name>
    <name type="ORF">YKR402</name>
</gene>
<accession>P36161</accession>
<accession>D6VXE2</accession>
<organism>
    <name type="scientific">Saccharomyces cerevisiae (strain ATCC 204508 / S288c)</name>
    <name type="common">Baker's yeast</name>
    <dbReference type="NCBI Taxonomy" id="559292"/>
    <lineage>
        <taxon>Eukaryota</taxon>
        <taxon>Fungi</taxon>
        <taxon>Dikarya</taxon>
        <taxon>Ascomycota</taxon>
        <taxon>Saccharomycotina</taxon>
        <taxon>Saccharomycetes</taxon>
        <taxon>Saccharomycetales</taxon>
        <taxon>Saccharomycetaceae</taxon>
        <taxon>Saccharomyces</taxon>
    </lineage>
</organism>
<keyword id="KW-0002">3D-structure</keyword>
<keyword id="KW-0007">Acetylation</keyword>
<keyword id="KW-0472">Membrane</keyword>
<keyword id="KW-0509">mRNA transport</keyword>
<keyword id="KW-0906">Nuclear pore complex</keyword>
<keyword id="KW-0539">Nucleus</keyword>
<keyword id="KW-0653">Protein transport</keyword>
<keyword id="KW-1185">Reference proteome</keyword>
<keyword id="KW-0811">Translocation</keyword>
<keyword id="KW-0813">Transport</keyword>